<sequence length="135" mass="14919">MQHLDIAELVRSALEVSGCDPSLIGGIDSHSTIVLDLFALPSICISVKDDDVWIWAQLGADSMVVLQQRAYEILMTIMEGCHFARGGQLLLGEQNGELTLKALVHPDFLSDGEKFSTALNGFYNYLEVFSRSLMR</sequence>
<reference key="1">
    <citation type="journal article" date="1994" name="J. Bacteriol.">
        <title>Molecular and functional characterization of the Salmonella typhimurium invasion genes invB and invC: homology of InvC to the F0F1 ATPase family of proteins.</title>
        <authorList>
            <person name="Eichelberg K."/>
            <person name="Ginocchio C.C."/>
            <person name="Galan J.E."/>
        </authorList>
    </citation>
    <scope>NUCLEOTIDE SEQUENCE [GENOMIC DNA]</scope>
    <source>
        <strain>SR-11</strain>
    </source>
</reference>
<reference key="2">
    <citation type="journal article" date="2001" name="Nature">
        <title>Complete genome sequence of Salmonella enterica serovar Typhimurium LT2.</title>
        <authorList>
            <person name="McClelland M."/>
            <person name="Sanderson K.E."/>
            <person name="Spieth J."/>
            <person name="Clifton S.W."/>
            <person name="Latreille P."/>
            <person name="Courtney L."/>
            <person name="Porwollik S."/>
            <person name="Ali J."/>
            <person name="Dante M."/>
            <person name="Du F."/>
            <person name="Hou S."/>
            <person name="Layman D."/>
            <person name="Leonard S."/>
            <person name="Nguyen C."/>
            <person name="Scott K."/>
            <person name="Holmes A."/>
            <person name="Grewal N."/>
            <person name="Mulvaney E."/>
            <person name="Ryan E."/>
            <person name="Sun H."/>
            <person name="Florea L."/>
            <person name="Miller W."/>
            <person name="Stoneking T."/>
            <person name="Nhan M."/>
            <person name="Waterston R."/>
            <person name="Wilson R.K."/>
        </authorList>
    </citation>
    <scope>NUCLEOTIDE SEQUENCE [LARGE SCALE GENOMIC DNA]</scope>
    <source>
        <strain>LT2 / SGSC1412 / ATCC 700720</strain>
    </source>
</reference>
<reference key="3">
    <citation type="journal article" date="2006" name="J. Bacteriol.">
        <title>The first 45 amino acids of SopA are necessary for InvB binding and SPI-1 secretion.</title>
        <authorList>
            <person name="Higashide W."/>
            <person name="Zhou D."/>
        </authorList>
    </citation>
    <scope>FUNCTION</scope>
    <scope>INTERACTION WITH SOPA</scope>
    <source>
        <strain>SL1344</strain>
    </source>
</reference>
<reference key="4">
    <citation type="journal article" date="2006" name="Mol. Cell">
        <title>A common structural motif in the binding of virulence factors to bacterial secretion chaperones.</title>
        <authorList>
            <person name="Lilic M."/>
            <person name="Vujanac M."/>
            <person name="Stebbins C.E."/>
        </authorList>
    </citation>
    <scope>X-RAY CRYSTALLOGRAPHY (2.2 ANGSTROMS) IN COMPLEX WITH SIPA</scope>
    <scope>SUBUNIT</scope>
    <scope>FUNCTION</scope>
</reference>
<accession>P0A1N0</accession>
<accession>P39443</accession>
<evidence type="ECO:0000269" key="1">
    <source>
    </source>
</evidence>
<evidence type="ECO:0000269" key="2">
    <source>
    </source>
</evidence>
<evidence type="ECO:0000305" key="3"/>
<evidence type="ECO:0007829" key="4">
    <source>
        <dbReference type="PDB" id="2FM8"/>
    </source>
</evidence>
<protein>
    <recommendedName>
        <fullName>Surface presentation of antigens protein SpaK</fullName>
    </recommendedName>
    <alternativeName>
        <fullName>Class 1B type III secretion system chaperone SpaK</fullName>
    </alternativeName>
    <alternativeName>
        <fullName>Invasion protein InvB</fullName>
    </alternativeName>
</protein>
<dbReference type="EMBL" id="U08279">
    <property type="protein sequence ID" value="AAA74037.1"/>
    <property type="molecule type" value="Genomic_DNA"/>
</dbReference>
<dbReference type="EMBL" id="AE006468">
    <property type="protein sequence ID" value="AAL21775.1"/>
    <property type="molecule type" value="Genomic_DNA"/>
</dbReference>
<dbReference type="RefSeq" id="NP_461816.1">
    <property type="nucleotide sequence ID" value="NC_003197.2"/>
</dbReference>
<dbReference type="RefSeq" id="WP_001164066.1">
    <property type="nucleotide sequence ID" value="NC_003197.2"/>
</dbReference>
<dbReference type="PDB" id="2FM8">
    <property type="method" value="X-ray"/>
    <property type="resolution" value="2.20 A"/>
    <property type="chains" value="A/B=1-134"/>
</dbReference>
<dbReference type="PDBsum" id="2FM8"/>
<dbReference type="SMR" id="P0A1N0"/>
<dbReference type="STRING" id="99287.STM2895"/>
<dbReference type="PaxDb" id="99287-STM2895"/>
<dbReference type="GeneID" id="1254418"/>
<dbReference type="KEGG" id="stm:STM2895"/>
<dbReference type="PATRIC" id="fig|99287.12.peg.3051"/>
<dbReference type="HOGENOM" id="CLU_125441_1_0_6"/>
<dbReference type="OMA" id="TIMEGCQ"/>
<dbReference type="BioCyc" id="SENT99287:STM2895-MONOMER"/>
<dbReference type="EvolutionaryTrace" id="P0A1N0"/>
<dbReference type="PHI-base" id="PHI:646"/>
<dbReference type="Proteomes" id="UP000001014">
    <property type="component" value="Chromosome"/>
</dbReference>
<dbReference type="CDD" id="cd17035">
    <property type="entry name" value="T3SC_IB_Spa15-like"/>
    <property type="match status" value="1"/>
</dbReference>
<dbReference type="Gene3D" id="3.30.1460.10">
    <property type="match status" value="1"/>
</dbReference>
<dbReference type="InterPro" id="IPR003065">
    <property type="entry name" value="Invas_SpaK"/>
</dbReference>
<dbReference type="NCBIfam" id="NF011864">
    <property type="entry name" value="PRK15336.1"/>
    <property type="match status" value="1"/>
</dbReference>
<dbReference type="Pfam" id="PF03519">
    <property type="entry name" value="Invas_SpaK"/>
    <property type="match status" value="1"/>
</dbReference>
<dbReference type="PRINTS" id="PR01305">
    <property type="entry name" value="SSPAKPROTEIN"/>
</dbReference>
<dbReference type="SUPFAM" id="SSF69635">
    <property type="entry name" value="Type III secretory system chaperone-like"/>
    <property type="match status" value="1"/>
</dbReference>
<proteinExistence type="evidence at protein level"/>
<feature type="chain" id="PRO_0000180965" description="Surface presentation of antigens protein SpaK">
    <location>
        <begin position="1"/>
        <end position="135"/>
    </location>
</feature>
<feature type="sequence conflict" description="In Ref. 1; AAA74037." evidence="3" ref="1">
    <location>
        <position position="87"/>
    </location>
</feature>
<feature type="helix" evidence="4">
    <location>
        <begin position="6"/>
        <end position="17"/>
    </location>
</feature>
<feature type="helix" evidence="4">
    <location>
        <begin position="21"/>
        <end position="23"/>
    </location>
</feature>
<feature type="strand" evidence="4">
    <location>
        <begin position="29"/>
        <end position="40"/>
    </location>
</feature>
<feature type="strand" evidence="4">
    <location>
        <begin position="43"/>
        <end position="48"/>
    </location>
</feature>
<feature type="strand" evidence="4">
    <location>
        <begin position="51"/>
        <end position="57"/>
    </location>
</feature>
<feature type="helix" evidence="4">
    <location>
        <begin position="62"/>
        <end position="78"/>
    </location>
</feature>
<feature type="helix" evidence="4">
    <location>
        <begin position="85"/>
        <end position="87"/>
    </location>
</feature>
<feature type="strand" evidence="4">
    <location>
        <begin position="90"/>
        <end position="94"/>
    </location>
</feature>
<feature type="strand" evidence="4">
    <location>
        <begin position="97"/>
        <end position="104"/>
    </location>
</feature>
<feature type="helix" evidence="4">
    <location>
        <begin position="106"/>
        <end position="108"/>
    </location>
</feature>
<feature type="strand" evidence="4">
    <location>
        <begin position="109"/>
        <end position="111"/>
    </location>
</feature>
<feature type="helix" evidence="4">
    <location>
        <begin position="112"/>
        <end position="132"/>
    </location>
</feature>
<name>SPAK_SALTY</name>
<gene>
    <name type="primary">spaK</name>
    <name type="synonym">invB</name>
    <name type="ordered locus">STM2895</name>
</gene>
<comment type="function">
    <text evidence="1 2">Involved in a secretory pathway responsible for the surface presentation of determinants needed for the entry of Salmonella species into mammalian cells. Chaperone specialized in the storage of effectors within the bacterial cytoplasm, maintaining them in a secretion-competent state, and allowing their immediate delivery to target cells upon contact of the bacterium with the host cells. Has been shown to chaperone SopA, SopE, SopE2 and SipA.</text>
</comment>
<comment type="subunit">
    <text evidence="1">Homodimer.</text>
</comment>
<comment type="similarity">
    <text evidence="3">Belongs to the SpaK family.</text>
</comment>
<organism>
    <name type="scientific">Salmonella typhimurium (strain LT2 / SGSC1412 / ATCC 700720)</name>
    <dbReference type="NCBI Taxonomy" id="99287"/>
    <lineage>
        <taxon>Bacteria</taxon>
        <taxon>Pseudomonadati</taxon>
        <taxon>Pseudomonadota</taxon>
        <taxon>Gammaproteobacteria</taxon>
        <taxon>Enterobacterales</taxon>
        <taxon>Enterobacteriaceae</taxon>
        <taxon>Salmonella</taxon>
    </lineage>
</organism>
<keyword id="KW-0002">3D-structure</keyword>
<keyword id="KW-0143">Chaperone</keyword>
<keyword id="KW-1185">Reference proteome</keyword>
<keyword id="KW-0843">Virulence</keyword>